<proteinExistence type="evidence at protein level"/>
<sequence length="11" mass="1101">GASGLIAFPRL</sequence>
<name>PVK2_POPSU</name>
<accession>P86669</accession>
<comment type="function">
    <text evidence="1">Mediates visceral muscle contractile activity (myotropic activity).</text>
</comment>
<comment type="subcellular location">
    <subcellularLocation>
        <location evidence="2">Secreted</location>
    </subcellularLocation>
</comment>
<comment type="mass spectrometry" mass="1100.7" method="MALDI" evidence="4"/>
<comment type="similarity">
    <text evidence="3">Belongs to the periviscerokinin family.</text>
</comment>
<dbReference type="GO" id="GO:0005576">
    <property type="term" value="C:extracellular region"/>
    <property type="evidence" value="ECO:0007669"/>
    <property type="project" value="UniProtKB-SubCell"/>
</dbReference>
<dbReference type="GO" id="GO:0007218">
    <property type="term" value="P:neuropeptide signaling pathway"/>
    <property type="evidence" value="ECO:0007669"/>
    <property type="project" value="UniProtKB-KW"/>
</dbReference>
<dbReference type="InterPro" id="IPR013231">
    <property type="entry name" value="Periviscerokinin"/>
</dbReference>
<dbReference type="Pfam" id="PF08259">
    <property type="entry name" value="Periviscerokin"/>
    <property type="match status" value="1"/>
</dbReference>
<feature type="peptide" id="PRO_0000395595" description="Periviscerokinin-2" evidence="4">
    <location>
        <begin position="1"/>
        <end position="11"/>
    </location>
</feature>
<feature type="modified residue" description="Leucine amide" evidence="4">
    <location>
        <position position="11"/>
    </location>
</feature>
<feature type="unsure residue" description="L or I" evidence="4">
    <location>
        <position position="5"/>
    </location>
</feature>
<feature type="unsure residue" description="I or L" evidence="4">
    <location>
        <position position="6"/>
    </location>
</feature>
<feature type="unsure residue" description="L or I" evidence="4">
    <location>
        <position position="11"/>
    </location>
</feature>
<evidence type="ECO:0000250" key="1">
    <source>
        <dbReference type="UniProtKB" id="P83923"/>
    </source>
</evidence>
<evidence type="ECO:0000250" key="2">
    <source>
        <dbReference type="UniProtKB" id="P84375"/>
    </source>
</evidence>
<evidence type="ECO:0000255" key="3"/>
<evidence type="ECO:0000269" key="4">
    <source>
    </source>
</evidence>
<evidence type="ECO:0000303" key="5">
    <source>
    </source>
</evidence>
<evidence type="ECO:0000305" key="6"/>
<reference evidence="6" key="1">
    <citation type="journal article" date="2010" name="Peptides">
        <title>CAPA-peptides of praying mantids (Mantodea).</title>
        <authorList>
            <person name="Koehler R."/>
            <person name="Predel R."/>
        </authorList>
    </citation>
    <scope>PROTEIN SEQUENCE</scope>
    <scope>MASS SPECTROMETRY</scope>
    <scope>AMIDATION AT LEU-11</scope>
    <source>
        <tissue evidence="4">Abdominal perisympathetic organs</tissue>
    </source>
</reference>
<organism>
    <name type="scientific">Popa spurca</name>
    <name type="common">Twig praying mantis</name>
    <dbReference type="NCBI Taxonomy" id="444980"/>
    <lineage>
        <taxon>Eukaryota</taxon>
        <taxon>Metazoa</taxon>
        <taxon>Ecdysozoa</taxon>
        <taxon>Arthropoda</taxon>
        <taxon>Hexapoda</taxon>
        <taxon>Insecta</taxon>
        <taxon>Pterygota</taxon>
        <taxon>Neoptera</taxon>
        <taxon>Polyneoptera</taxon>
        <taxon>Dictyoptera</taxon>
        <taxon>Mantodea</taxon>
        <taxon>Eumantodea</taxon>
        <taxon>Mantoidea</taxon>
        <taxon>Mantidae</taxon>
        <taxon>Vatinae</taxon>
        <taxon>Popa</taxon>
    </lineage>
</organism>
<keyword id="KW-0027">Amidation</keyword>
<keyword id="KW-0903">Direct protein sequencing</keyword>
<keyword id="KW-0527">Neuropeptide</keyword>
<keyword id="KW-0964">Secreted</keyword>
<protein>
    <recommendedName>
        <fullName evidence="5">Periviscerokinin-2</fullName>
    </recommendedName>
</protein>